<evidence type="ECO:0000255" key="1">
    <source>
        <dbReference type="HAMAP-Rule" id="MF_00500"/>
    </source>
</evidence>
<evidence type="ECO:0000305" key="2"/>
<sequence>MANIKSAKKRIKVIETKTLRNKVIKSKVKTLVKKVEVAVAASDKDLATKSLKDAVVAIDKAASKGVYHKKNAARKVGRLAKAVNSIA</sequence>
<feature type="chain" id="PRO_1000081423" description="Small ribosomal subunit protein bS20">
    <location>
        <begin position="1"/>
        <end position="87"/>
    </location>
</feature>
<comment type="function">
    <text evidence="1">Binds directly to 16S ribosomal RNA.</text>
</comment>
<comment type="similarity">
    <text evidence="1">Belongs to the bacterial ribosomal protein bS20 family.</text>
</comment>
<reference key="1">
    <citation type="submission" date="2007-11" db="EMBL/GenBank/DDBJ databases">
        <title>Complete genome sequence of Clostridium phytofermentans ISDg.</title>
        <authorList>
            <person name="Leschine S.B."/>
            <person name="Warnick T.A."/>
            <person name="Blanchard J.L."/>
            <person name="Schnell D.J."/>
            <person name="Petit E.L."/>
            <person name="LaTouf W.G."/>
            <person name="Copeland A."/>
            <person name="Lucas S."/>
            <person name="Lapidus A."/>
            <person name="Barry K."/>
            <person name="Glavina del Rio T."/>
            <person name="Dalin E."/>
            <person name="Tice H."/>
            <person name="Pitluck S."/>
            <person name="Kiss H."/>
            <person name="Brettin T."/>
            <person name="Bruce D."/>
            <person name="Detter J.C."/>
            <person name="Han C."/>
            <person name="Kuske C."/>
            <person name="Schmutz J."/>
            <person name="Larimer F."/>
            <person name="Land M."/>
            <person name="Hauser L."/>
            <person name="Kyrpides N."/>
            <person name="Kim E.A."/>
            <person name="Richardson P."/>
        </authorList>
    </citation>
    <scope>NUCLEOTIDE SEQUENCE [LARGE SCALE GENOMIC DNA]</scope>
    <source>
        <strain>ATCC 700394 / DSM 18823 / ISDg</strain>
    </source>
</reference>
<keyword id="KW-1185">Reference proteome</keyword>
<keyword id="KW-0687">Ribonucleoprotein</keyword>
<keyword id="KW-0689">Ribosomal protein</keyword>
<keyword id="KW-0694">RNA-binding</keyword>
<keyword id="KW-0699">rRNA-binding</keyword>
<organism>
    <name type="scientific">Lachnoclostridium phytofermentans (strain ATCC 700394 / DSM 18823 / ISDg)</name>
    <name type="common">Clostridium phytofermentans</name>
    <dbReference type="NCBI Taxonomy" id="357809"/>
    <lineage>
        <taxon>Bacteria</taxon>
        <taxon>Bacillati</taxon>
        <taxon>Bacillota</taxon>
        <taxon>Clostridia</taxon>
        <taxon>Lachnospirales</taxon>
        <taxon>Lachnospiraceae</taxon>
    </lineage>
</organism>
<protein>
    <recommendedName>
        <fullName evidence="1">Small ribosomal subunit protein bS20</fullName>
    </recommendedName>
    <alternativeName>
        <fullName evidence="2">30S ribosomal protein S20</fullName>
    </alternativeName>
</protein>
<name>RS20_LACP7</name>
<gene>
    <name evidence="1" type="primary">rpsT</name>
    <name type="ordered locus">Cphy_2318</name>
</gene>
<accession>A9KKU7</accession>
<dbReference type="EMBL" id="CP000885">
    <property type="protein sequence ID" value="ABX42679.1"/>
    <property type="molecule type" value="Genomic_DNA"/>
</dbReference>
<dbReference type="SMR" id="A9KKU7"/>
<dbReference type="STRING" id="357809.Cphy_2318"/>
<dbReference type="KEGG" id="cpy:Cphy_2318"/>
<dbReference type="eggNOG" id="COG0268">
    <property type="taxonomic scope" value="Bacteria"/>
</dbReference>
<dbReference type="HOGENOM" id="CLU_160655_3_1_9"/>
<dbReference type="Proteomes" id="UP000000370">
    <property type="component" value="Chromosome"/>
</dbReference>
<dbReference type="GO" id="GO:0015935">
    <property type="term" value="C:small ribosomal subunit"/>
    <property type="evidence" value="ECO:0007669"/>
    <property type="project" value="TreeGrafter"/>
</dbReference>
<dbReference type="GO" id="GO:0070181">
    <property type="term" value="F:small ribosomal subunit rRNA binding"/>
    <property type="evidence" value="ECO:0007669"/>
    <property type="project" value="TreeGrafter"/>
</dbReference>
<dbReference type="GO" id="GO:0003735">
    <property type="term" value="F:structural constituent of ribosome"/>
    <property type="evidence" value="ECO:0007669"/>
    <property type="project" value="InterPro"/>
</dbReference>
<dbReference type="GO" id="GO:0006412">
    <property type="term" value="P:translation"/>
    <property type="evidence" value="ECO:0007669"/>
    <property type="project" value="UniProtKB-UniRule"/>
</dbReference>
<dbReference type="FunFam" id="1.20.58.110:FF:000001">
    <property type="entry name" value="30S ribosomal protein S20"/>
    <property type="match status" value="1"/>
</dbReference>
<dbReference type="Gene3D" id="1.20.58.110">
    <property type="entry name" value="Ribosomal protein S20"/>
    <property type="match status" value="1"/>
</dbReference>
<dbReference type="HAMAP" id="MF_00500">
    <property type="entry name" value="Ribosomal_bS20"/>
    <property type="match status" value="1"/>
</dbReference>
<dbReference type="InterPro" id="IPR002583">
    <property type="entry name" value="Ribosomal_bS20"/>
</dbReference>
<dbReference type="InterPro" id="IPR036510">
    <property type="entry name" value="Ribosomal_bS20_sf"/>
</dbReference>
<dbReference type="NCBIfam" id="TIGR00029">
    <property type="entry name" value="S20"/>
    <property type="match status" value="1"/>
</dbReference>
<dbReference type="PANTHER" id="PTHR33398">
    <property type="entry name" value="30S RIBOSOMAL PROTEIN S20"/>
    <property type="match status" value="1"/>
</dbReference>
<dbReference type="PANTHER" id="PTHR33398:SF1">
    <property type="entry name" value="SMALL RIBOSOMAL SUBUNIT PROTEIN BS20C"/>
    <property type="match status" value="1"/>
</dbReference>
<dbReference type="Pfam" id="PF01649">
    <property type="entry name" value="Ribosomal_S20p"/>
    <property type="match status" value="1"/>
</dbReference>
<dbReference type="SUPFAM" id="SSF46992">
    <property type="entry name" value="Ribosomal protein S20"/>
    <property type="match status" value="1"/>
</dbReference>
<proteinExistence type="inferred from homology"/>